<keyword id="KW-1003">Cell membrane</keyword>
<keyword id="KW-0169">Cobalamin biosynthesis</keyword>
<keyword id="KW-0170">Cobalt</keyword>
<keyword id="KW-0171">Cobalt transport</keyword>
<keyword id="KW-0406">Ion transport</keyword>
<keyword id="KW-0472">Membrane</keyword>
<keyword id="KW-1185">Reference proteome</keyword>
<keyword id="KW-0812">Transmembrane</keyword>
<keyword id="KW-1133">Transmembrane helix</keyword>
<keyword id="KW-0813">Transport</keyword>
<sequence length="231" mass="24570">MHIMEGYLPIGWCIFWAVLSAPFVIYGIWKMTKMIQEDRRVLPLMAVCGAFVFVLSALKIPSVTGSCSHPTGTGLSAAFFGPFITSVLGTIVLLFQALLLAHGGLTTLGANVFSMAIAGPFIAWLVFVGLRKTGKVGIGVAVFITAAVANLVTYTVTSLQLALVFPVEGSILNAFIAFAGIFAVTQIPLAIIEGIICALVAKYIVRVKPEILKKLGIIQDEEIAKIQGEAV</sequence>
<organism>
    <name type="scientific">Methanocorpusculum labreanum (strain ATCC 43576 / DSM 4855 / Z)</name>
    <dbReference type="NCBI Taxonomy" id="410358"/>
    <lineage>
        <taxon>Archaea</taxon>
        <taxon>Methanobacteriati</taxon>
        <taxon>Methanobacteriota</taxon>
        <taxon>Stenosarchaea group</taxon>
        <taxon>Methanomicrobia</taxon>
        <taxon>Methanomicrobiales</taxon>
        <taxon>Methanocorpusculaceae</taxon>
        <taxon>Methanocorpusculum</taxon>
    </lineage>
</organism>
<dbReference type="EMBL" id="CP000559">
    <property type="protein sequence ID" value="ABN07254.1"/>
    <property type="molecule type" value="Genomic_DNA"/>
</dbReference>
<dbReference type="RefSeq" id="WP_011833457.1">
    <property type="nucleotide sequence ID" value="NC_008942.1"/>
</dbReference>
<dbReference type="SMR" id="A2SSE8"/>
<dbReference type="STRING" id="410358.Mlab_1085"/>
<dbReference type="GeneID" id="4796158"/>
<dbReference type="KEGG" id="mla:Mlab_1085"/>
<dbReference type="eggNOG" id="arCOG02248">
    <property type="taxonomic scope" value="Archaea"/>
</dbReference>
<dbReference type="HOGENOM" id="CLU_052508_3_0_2"/>
<dbReference type="OrthoDB" id="30946at2157"/>
<dbReference type="UniPathway" id="UPA00148"/>
<dbReference type="Proteomes" id="UP000000365">
    <property type="component" value="Chromosome"/>
</dbReference>
<dbReference type="GO" id="GO:0043190">
    <property type="term" value="C:ATP-binding cassette (ABC) transporter complex"/>
    <property type="evidence" value="ECO:0007669"/>
    <property type="project" value="InterPro"/>
</dbReference>
<dbReference type="GO" id="GO:0015087">
    <property type="term" value="F:cobalt ion transmembrane transporter activity"/>
    <property type="evidence" value="ECO:0007669"/>
    <property type="project" value="UniProtKB-UniRule"/>
</dbReference>
<dbReference type="GO" id="GO:0009236">
    <property type="term" value="P:cobalamin biosynthetic process"/>
    <property type="evidence" value="ECO:0007669"/>
    <property type="project" value="UniProtKB-UniRule"/>
</dbReference>
<dbReference type="FunFam" id="1.10.1760.20:FF:000001">
    <property type="entry name" value="Cobalt transport protein CbiM"/>
    <property type="match status" value="1"/>
</dbReference>
<dbReference type="Gene3D" id="1.10.1760.20">
    <property type="match status" value="1"/>
</dbReference>
<dbReference type="HAMAP" id="MF_01462">
    <property type="entry name" value="CbiM"/>
    <property type="match status" value="1"/>
</dbReference>
<dbReference type="InterPro" id="IPR018024">
    <property type="entry name" value="CbiM"/>
</dbReference>
<dbReference type="InterPro" id="IPR002751">
    <property type="entry name" value="CbiM/NikMN"/>
</dbReference>
<dbReference type="NCBIfam" id="TIGR00123">
    <property type="entry name" value="cbiM"/>
    <property type="match status" value="1"/>
</dbReference>
<dbReference type="NCBIfam" id="NF006184">
    <property type="entry name" value="PRK08319.1"/>
    <property type="match status" value="1"/>
</dbReference>
<dbReference type="PANTHER" id="PTHR43627">
    <property type="match status" value="1"/>
</dbReference>
<dbReference type="PANTHER" id="PTHR43627:SF1">
    <property type="entry name" value="COBALT TRANSPORT PROTEIN CBIM"/>
    <property type="match status" value="1"/>
</dbReference>
<dbReference type="Pfam" id="PF01891">
    <property type="entry name" value="CbiM"/>
    <property type="match status" value="1"/>
</dbReference>
<protein>
    <recommendedName>
        <fullName evidence="1">Putative cobalt transport protein CbiM 2</fullName>
    </recommendedName>
    <alternativeName>
        <fullName evidence="1">Energy-coupling factor transporter probable substrate-capture protein CbiM 2</fullName>
        <shortName evidence="1">ECF transporter S component CbiM 2</shortName>
    </alternativeName>
</protein>
<reference key="1">
    <citation type="journal article" date="2009" name="Stand. Genomic Sci.">
        <title>Complete genome sequence of Methanocorpusculum labreanum type strain Z.</title>
        <authorList>
            <person name="Anderson I.J."/>
            <person name="Sieprawska-Lupa M."/>
            <person name="Goltsman E."/>
            <person name="Lapidus A."/>
            <person name="Copeland A."/>
            <person name="Glavina Del Rio T."/>
            <person name="Tice H."/>
            <person name="Dalin E."/>
            <person name="Barry K."/>
            <person name="Pitluck S."/>
            <person name="Hauser L."/>
            <person name="Land M."/>
            <person name="Lucas S."/>
            <person name="Richardson P."/>
            <person name="Whitman W.B."/>
            <person name="Kyrpides N.C."/>
        </authorList>
    </citation>
    <scope>NUCLEOTIDE SEQUENCE [LARGE SCALE GENOMIC DNA]</scope>
    <source>
        <strain>ATCC 43576 / DSM 4855 / Z</strain>
    </source>
</reference>
<gene>
    <name evidence="1" type="primary">cbiM2</name>
    <name type="ordered locus">Mlab_1085</name>
</gene>
<proteinExistence type="inferred from homology"/>
<comment type="function">
    <text evidence="1">Part of the energy-coupling factor (ECF) transporter complex CbiMNOQ involved in cobalt import.</text>
</comment>
<comment type="pathway">
    <text evidence="1">Cofactor biosynthesis; adenosylcobalamin biosynthesis.</text>
</comment>
<comment type="subunit">
    <text evidence="1">Forms an energy-coupling factor (ECF) transporter complex composed of an ATP-binding protein (A component, CbiO), a transmembrane protein (T component, CbiQ) and 2 possible substrate-capture proteins (S components, CbiM and CbiN) of unknown stoichimetry.</text>
</comment>
<comment type="subcellular location">
    <subcellularLocation>
        <location evidence="1">Cell membrane</location>
        <topology evidence="1">Multi-pass membrane protein</topology>
    </subcellularLocation>
</comment>
<comment type="similarity">
    <text evidence="1">Belongs to the CbiM family.</text>
</comment>
<name>CBIM2_METLZ</name>
<feature type="chain" id="PRO_0000411156" description="Putative cobalt transport protein CbiM 2">
    <location>
        <begin position="1"/>
        <end position="231"/>
    </location>
</feature>
<feature type="transmembrane region" description="Helical" evidence="1">
    <location>
        <begin position="8"/>
        <end position="28"/>
    </location>
</feature>
<feature type="transmembrane region" description="Helical" evidence="1">
    <location>
        <begin position="41"/>
        <end position="61"/>
    </location>
</feature>
<feature type="transmembrane region" description="Helical" evidence="1">
    <location>
        <begin position="75"/>
        <end position="95"/>
    </location>
</feature>
<feature type="transmembrane region" description="Helical" evidence="1">
    <location>
        <begin position="108"/>
        <end position="128"/>
    </location>
</feature>
<feature type="transmembrane region" description="Helical" evidence="1">
    <location>
        <begin position="136"/>
        <end position="156"/>
    </location>
</feature>
<feature type="transmembrane region" description="Helical" evidence="1">
    <location>
        <begin position="176"/>
        <end position="196"/>
    </location>
</feature>
<accession>A2SSE8</accession>
<evidence type="ECO:0000255" key="1">
    <source>
        <dbReference type="HAMAP-Rule" id="MF_01462"/>
    </source>
</evidence>